<reference key="1">
    <citation type="submission" date="2003-12" db="EMBL/GenBank/DDBJ databases">
        <authorList>
            <consortium name="NIH - Xenopus Gene Collection (XGC) project"/>
        </authorList>
    </citation>
    <scope>NUCLEOTIDE SEQUENCE [LARGE SCALE MRNA]</scope>
    <source>
        <tissue>Embryo</tissue>
    </source>
</reference>
<accession>Q6P315</accession>
<evidence type="ECO:0000250" key="1">
    <source>
        <dbReference type="UniProtKB" id="Q16576"/>
    </source>
</evidence>
<evidence type="ECO:0000305" key="2"/>
<sequence length="425" mass="47759">MANKEMFEDTVEERVINEEYKIWKKNTPFLYDLVMTHALEWPSLTVQWLPDVTRPEGKDYALHWLVLGTHTSDEQNHLVVARVQIPNDDAQFDASHYDSEKGEFGGFGSVSGKIETEIKINHEGEVNRARYMPQNPCIIATKTPSADVLVFDYTKHPSKPDPSGDCSPDLRLRGHQKEGYGLSWNSNLSGHLLSASDDHTVCLWDISAGPKEGKVVDAKAIFTGHSAVVEDVAWHLLHESLFGSVADDQKLMIWDTRSNTTSKPSHSVDAHTAEVNCLSFNPYSEFILATGSADKTVALWDLRNLKLKLHSFESHKDEIFQVHWSPHNETILASSGTDRRLNVWDLSKIGEEQSAEDAEDGPPELLFIHGGHTAKISDFSWNPNEPWVICSVSEDNIMQIWQMAENIYNDEEPDIPASELEAQGS</sequence>
<proteinExistence type="evidence at transcript level"/>
<organism>
    <name type="scientific">Xenopus tropicalis</name>
    <name type="common">Western clawed frog</name>
    <name type="synonym">Silurana tropicalis</name>
    <dbReference type="NCBI Taxonomy" id="8364"/>
    <lineage>
        <taxon>Eukaryota</taxon>
        <taxon>Metazoa</taxon>
        <taxon>Chordata</taxon>
        <taxon>Craniata</taxon>
        <taxon>Vertebrata</taxon>
        <taxon>Euteleostomi</taxon>
        <taxon>Amphibia</taxon>
        <taxon>Batrachia</taxon>
        <taxon>Anura</taxon>
        <taxon>Pipoidea</taxon>
        <taxon>Pipidae</taxon>
        <taxon>Xenopodinae</taxon>
        <taxon>Xenopus</taxon>
        <taxon>Silurana</taxon>
    </lineage>
</organism>
<protein>
    <recommendedName>
        <fullName>Histone-binding protein RBBP7</fullName>
    </recommendedName>
    <alternativeName>
        <fullName>Retinoblastoma-binding protein 7</fullName>
        <shortName>RBBP-7</shortName>
    </alternativeName>
</protein>
<gene>
    <name type="primary">rbbp7</name>
</gene>
<feature type="chain" id="PRO_0000223249" description="Histone-binding protein RBBP7">
    <location>
        <begin position="1"/>
        <end position="425"/>
    </location>
</feature>
<feature type="repeat" description="WD 1">
    <location>
        <begin position="47"/>
        <end position="122"/>
    </location>
</feature>
<feature type="repeat" description="WD 2">
    <location>
        <begin position="128"/>
        <end position="173"/>
    </location>
</feature>
<feature type="repeat" description="WD 3">
    <location>
        <begin position="181"/>
        <end position="217"/>
    </location>
</feature>
<feature type="repeat" description="WD 4">
    <location>
        <begin position="228"/>
        <end position="269"/>
    </location>
</feature>
<feature type="repeat" description="WD 5">
    <location>
        <begin position="275"/>
        <end position="312"/>
    </location>
</feature>
<feature type="repeat" description="WD 6">
    <location>
        <begin position="318"/>
        <end position="369"/>
    </location>
</feature>
<feature type="repeat" description="WD 7">
    <location>
        <begin position="376"/>
        <end position="403"/>
    </location>
</feature>
<dbReference type="EMBL" id="BC064219">
    <property type="protein sequence ID" value="AAH64219.1"/>
    <property type="molecule type" value="mRNA"/>
</dbReference>
<dbReference type="RefSeq" id="NP_989285.1">
    <property type="nucleotide sequence ID" value="NM_203954.1"/>
</dbReference>
<dbReference type="SMR" id="Q6P315"/>
<dbReference type="FunCoup" id="Q6P315">
    <property type="interactions" value="2766"/>
</dbReference>
<dbReference type="STRING" id="8364.ENSXETP00000004533"/>
<dbReference type="PaxDb" id="8364-ENSXETP00000002157"/>
<dbReference type="DNASU" id="394900"/>
<dbReference type="GeneID" id="394900"/>
<dbReference type="KEGG" id="xtr:394900"/>
<dbReference type="AGR" id="Xenbase:XB-GENE-487909"/>
<dbReference type="CTD" id="5931"/>
<dbReference type="Xenbase" id="XB-GENE-487909">
    <property type="gene designation" value="rbbp7"/>
</dbReference>
<dbReference type="eggNOG" id="KOG0264">
    <property type="taxonomic scope" value="Eukaryota"/>
</dbReference>
<dbReference type="HOGENOM" id="CLU_020445_3_1_1"/>
<dbReference type="InParanoid" id="Q6P315"/>
<dbReference type="OMA" id="KIRAMPA"/>
<dbReference type="OrthoDB" id="427795at2759"/>
<dbReference type="PhylomeDB" id="Q6P315"/>
<dbReference type="TreeFam" id="TF106485"/>
<dbReference type="Reactome" id="R-XTR-212300">
    <property type="pathway name" value="PRC2 methylates histones and DNA"/>
</dbReference>
<dbReference type="Reactome" id="R-XTR-2559580">
    <property type="pathway name" value="Oxidative Stress Induced Senescence"/>
</dbReference>
<dbReference type="Reactome" id="R-XTR-3214815">
    <property type="pathway name" value="HDACs deacetylate histones"/>
</dbReference>
<dbReference type="Reactome" id="R-XTR-6804758">
    <property type="pathway name" value="Regulation of TP53 Activity through Acetylation"/>
</dbReference>
<dbReference type="Reactome" id="R-XTR-73762">
    <property type="pathway name" value="RNA Polymerase I Transcription Initiation"/>
</dbReference>
<dbReference type="Reactome" id="R-XTR-8943724">
    <property type="pathway name" value="Regulation of PTEN gene transcription"/>
</dbReference>
<dbReference type="Reactome" id="R-XTR-8951664">
    <property type="pathway name" value="Neddylation"/>
</dbReference>
<dbReference type="Reactome" id="R-XTR-8953750">
    <property type="pathway name" value="Transcriptional Regulation by E2F6"/>
</dbReference>
<dbReference type="Proteomes" id="UP000008143">
    <property type="component" value="Chromosome 2"/>
</dbReference>
<dbReference type="Bgee" id="ENSXETG00000026983">
    <property type="expression patterns" value="Expressed in ovary and 18 other cell types or tissues"/>
</dbReference>
<dbReference type="GO" id="GO:0035098">
    <property type="term" value="C:ESC/E(Z) complex"/>
    <property type="evidence" value="ECO:0000250"/>
    <property type="project" value="UniProtKB"/>
</dbReference>
<dbReference type="GO" id="GO:0005634">
    <property type="term" value="C:nucleus"/>
    <property type="evidence" value="ECO:0000250"/>
    <property type="project" value="UniProtKB"/>
</dbReference>
<dbReference type="GO" id="GO:0016581">
    <property type="term" value="C:NuRD complex"/>
    <property type="evidence" value="ECO:0000250"/>
    <property type="project" value="UniProtKB"/>
</dbReference>
<dbReference type="GO" id="GO:0006325">
    <property type="term" value="P:chromatin organization"/>
    <property type="evidence" value="ECO:0007669"/>
    <property type="project" value="UniProtKB-KW"/>
</dbReference>
<dbReference type="GO" id="GO:0006260">
    <property type="term" value="P:DNA replication"/>
    <property type="evidence" value="ECO:0007669"/>
    <property type="project" value="UniProtKB-KW"/>
</dbReference>
<dbReference type="FunFam" id="2.130.10.10:FF:000021">
    <property type="entry name" value="histone-binding protein RBBP4 isoform X1"/>
    <property type="match status" value="1"/>
</dbReference>
<dbReference type="Gene3D" id="2.130.10.10">
    <property type="entry name" value="YVTN repeat-like/Quinoprotein amine dehydrogenase"/>
    <property type="match status" value="1"/>
</dbReference>
<dbReference type="InterPro" id="IPR020472">
    <property type="entry name" value="G-protein_beta_WD-40_rep"/>
</dbReference>
<dbReference type="InterPro" id="IPR022052">
    <property type="entry name" value="Histone-bd_RBBP4-like_N"/>
</dbReference>
<dbReference type="InterPro" id="IPR015943">
    <property type="entry name" value="WD40/YVTN_repeat-like_dom_sf"/>
</dbReference>
<dbReference type="InterPro" id="IPR019775">
    <property type="entry name" value="WD40_repeat_CS"/>
</dbReference>
<dbReference type="InterPro" id="IPR036322">
    <property type="entry name" value="WD40_repeat_dom_sf"/>
</dbReference>
<dbReference type="InterPro" id="IPR001680">
    <property type="entry name" value="WD40_rpt"/>
</dbReference>
<dbReference type="InterPro" id="IPR050459">
    <property type="entry name" value="WD_repeat_RBAP46/RBAP48/MSI1"/>
</dbReference>
<dbReference type="PANTHER" id="PTHR22850">
    <property type="entry name" value="WD40 REPEAT FAMILY"/>
    <property type="match status" value="1"/>
</dbReference>
<dbReference type="Pfam" id="PF12265">
    <property type="entry name" value="CAF1C_H4-bd"/>
    <property type="match status" value="1"/>
</dbReference>
<dbReference type="Pfam" id="PF00400">
    <property type="entry name" value="WD40"/>
    <property type="match status" value="5"/>
</dbReference>
<dbReference type="PRINTS" id="PR00320">
    <property type="entry name" value="GPROTEINBRPT"/>
</dbReference>
<dbReference type="SMART" id="SM00320">
    <property type="entry name" value="WD40"/>
    <property type="match status" value="6"/>
</dbReference>
<dbReference type="SUPFAM" id="SSF50978">
    <property type="entry name" value="WD40 repeat-like"/>
    <property type="match status" value="1"/>
</dbReference>
<dbReference type="PROSITE" id="PS00678">
    <property type="entry name" value="WD_REPEATS_1"/>
    <property type="match status" value="3"/>
</dbReference>
<dbReference type="PROSITE" id="PS50082">
    <property type="entry name" value="WD_REPEATS_2"/>
    <property type="match status" value="5"/>
</dbReference>
<dbReference type="PROSITE" id="PS50294">
    <property type="entry name" value="WD_REPEATS_REGION"/>
    <property type="match status" value="1"/>
</dbReference>
<keyword id="KW-0143">Chaperone</keyword>
<keyword id="KW-0156">Chromatin regulator</keyword>
<keyword id="KW-0235">DNA replication</keyword>
<keyword id="KW-0539">Nucleus</keyword>
<keyword id="KW-1185">Reference proteome</keyword>
<keyword id="KW-0677">Repeat</keyword>
<keyword id="KW-0678">Repressor</keyword>
<keyword id="KW-0804">Transcription</keyword>
<keyword id="KW-0805">Transcription regulation</keyword>
<keyword id="KW-0853">WD repeat</keyword>
<name>RBBP7_XENTR</name>
<comment type="function">
    <text evidence="1">Core histone-binding subunit that may target chromatin remodeling factors, histone acetyltransferases and histone deacetylases to their histone substrates in a manner that is regulated by nucleosomal DNA. Component of several complexes which regulate chromatin metabolism.</text>
</comment>
<comment type="subunit">
    <text evidence="1">Binds directly to helix 1 of the histone fold of histone H4, a region that is not accessible when H4 is in chromatin.</text>
</comment>
<comment type="subcellular location">
    <subcellularLocation>
        <location evidence="1">Nucleus</location>
    </subcellularLocation>
</comment>
<comment type="similarity">
    <text evidence="2">Belongs to the WD repeat RBAP46/RBAP48/MSI1 family.</text>
</comment>